<evidence type="ECO:0000255" key="1">
    <source>
        <dbReference type="HAMAP-Rule" id="MF_01307"/>
    </source>
</evidence>
<evidence type="ECO:0000256" key="2">
    <source>
        <dbReference type="SAM" id="MobiDB-lite"/>
    </source>
</evidence>
<evidence type="ECO:0000305" key="3"/>
<proteinExistence type="inferred from homology"/>
<name>RS5_RHIWR</name>
<comment type="function">
    <text evidence="1">With S4 and S12 plays an important role in translational accuracy.</text>
</comment>
<comment type="function">
    <text evidence="1">Located at the back of the 30S subunit body where it stabilizes the conformation of the head with respect to the body.</text>
</comment>
<comment type="subunit">
    <text evidence="1">Part of the 30S ribosomal subunit. Contacts proteins S4 and S8.</text>
</comment>
<comment type="domain">
    <text>The N-terminal domain interacts with the head of the 30S subunit; the C-terminal domain interacts with the body and contacts protein S4. The interaction surface between S4 and S5 is involved in control of translational fidelity.</text>
</comment>
<comment type="similarity">
    <text evidence="1">Belongs to the universal ribosomal protein uS5 family.</text>
</comment>
<protein>
    <recommendedName>
        <fullName evidence="1">Small ribosomal subunit protein uS5</fullName>
    </recommendedName>
    <alternativeName>
        <fullName evidence="3">30S ribosomal protein S5</fullName>
    </alternativeName>
</protein>
<keyword id="KW-1185">Reference proteome</keyword>
<keyword id="KW-0687">Ribonucleoprotein</keyword>
<keyword id="KW-0689">Ribosomal protein</keyword>
<keyword id="KW-0694">RNA-binding</keyword>
<keyword id="KW-0699">rRNA-binding</keyword>
<accession>A5V5Y5</accession>
<gene>
    <name evidence="1" type="primary">rpsE</name>
    <name type="ordered locus">Swit_1336</name>
</gene>
<dbReference type="EMBL" id="CP000699">
    <property type="protein sequence ID" value="ABQ67701.1"/>
    <property type="molecule type" value="Genomic_DNA"/>
</dbReference>
<dbReference type="SMR" id="A5V5Y5"/>
<dbReference type="STRING" id="392499.Swit_1336"/>
<dbReference type="PaxDb" id="392499-Swit_1336"/>
<dbReference type="KEGG" id="swi:Swit_1336"/>
<dbReference type="eggNOG" id="COG0098">
    <property type="taxonomic scope" value="Bacteria"/>
</dbReference>
<dbReference type="HOGENOM" id="CLU_065898_2_1_5"/>
<dbReference type="OrthoDB" id="9809045at2"/>
<dbReference type="Proteomes" id="UP000001989">
    <property type="component" value="Chromosome"/>
</dbReference>
<dbReference type="GO" id="GO:0015935">
    <property type="term" value="C:small ribosomal subunit"/>
    <property type="evidence" value="ECO:0007669"/>
    <property type="project" value="InterPro"/>
</dbReference>
<dbReference type="GO" id="GO:0019843">
    <property type="term" value="F:rRNA binding"/>
    <property type="evidence" value="ECO:0007669"/>
    <property type="project" value="UniProtKB-UniRule"/>
</dbReference>
<dbReference type="GO" id="GO:0003735">
    <property type="term" value="F:structural constituent of ribosome"/>
    <property type="evidence" value="ECO:0007669"/>
    <property type="project" value="InterPro"/>
</dbReference>
<dbReference type="GO" id="GO:0006412">
    <property type="term" value="P:translation"/>
    <property type="evidence" value="ECO:0007669"/>
    <property type="project" value="UniProtKB-UniRule"/>
</dbReference>
<dbReference type="FunFam" id="3.30.160.20:FF:000001">
    <property type="entry name" value="30S ribosomal protein S5"/>
    <property type="match status" value="1"/>
</dbReference>
<dbReference type="FunFam" id="3.30.230.10:FF:000002">
    <property type="entry name" value="30S ribosomal protein S5"/>
    <property type="match status" value="1"/>
</dbReference>
<dbReference type="Gene3D" id="3.30.160.20">
    <property type="match status" value="1"/>
</dbReference>
<dbReference type="Gene3D" id="3.30.230.10">
    <property type="match status" value="1"/>
</dbReference>
<dbReference type="HAMAP" id="MF_01307_B">
    <property type="entry name" value="Ribosomal_uS5_B"/>
    <property type="match status" value="1"/>
</dbReference>
<dbReference type="InterPro" id="IPR020568">
    <property type="entry name" value="Ribosomal_Su5_D2-typ_SF"/>
</dbReference>
<dbReference type="InterPro" id="IPR000851">
    <property type="entry name" value="Ribosomal_uS5"/>
</dbReference>
<dbReference type="InterPro" id="IPR005712">
    <property type="entry name" value="Ribosomal_uS5_bac-type"/>
</dbReference>
<dbReference type="InterPro" id="IPR005324">
    <property type="entry name" value="Ribosomal_uS5_C"/>
</dbReference>
<dbReference type="InterPro" id="IPR013810">
    <property type="entry name" value="Ribosomal_uS5_N"/>
</dbReference>
<dbReference type="InterPro" id="IPR018192">
    <property type="entry name" value="Ribosomal_uS5_N_CS"/>
</dbReference>
<dbReference type="InterPro" id="IPR014721">
    <property type="entry name" value="Ribsml_uS5_D2-typ_fold_subgr"/>
</dbReference>
<dbReference type="NCBIfam" id="TIGR01021">
    <property type="entry name" value="rpsE_bact"/>
    <property type="match status" value="1"/>
</dbReference>
<dbReference type="PANTHER" id="PTHR48277">
    <property type="entry name" value="MITOCHONDRIAL RIBOSOMAL PROTEIN S5"/>
    <property type="match status" value="1"/>
</dbReference>
<dbReference type="PANTHER" id="PTHR48277:SF1">
    <property type="entry name" value="MITOCHONDRIAL RIBOSOMAL PROTEIN S5"/>
    <property type="match status" value="1"/>
</dbReference>
<dbReference type="Pfam" id="PF00333">
    <property type="entry name" value="Ribosomal_S5"/>
    <property type="match status" value="1"/>
</dbReference>
<dbReference type="Pfam" id="PF03719">
    <property type="entry name" value="Ribosomal_S5_C"/>
    <property type="match status" value="1"/>
</dbReference>
<dbReference type="SUPFAM" id="SSF54768">
    <property type="entry name" value="dsRNA-binding domain-like"/>
    <property type="match status" value="1"/>
</dbReference>
<dbReference type="SUPFAM" id="SSF54211">
    <property type="entry name" value="Ribosomal protein S5 domain 2-like"/>
    <property type="match status" value="1"/>
</dbReference>
<dbReference type="PROSITE" id="PS00585">
    <property type="entry name" value="RIBOSOMAL_S5"/>
    <property type="match status" value="1"/>
</dbReference>
<dbReference type="PROSITE" id="PS50881">
    <property type="entry name" value="S5_DSRBD"/>
    <property type="match status" value="1"/>
</dbReference>
<organism>
    <name type="scientific">Rhizorhabdus wittichii (strain DSM 6014 / CCUG 31198 / JCM 15750 / NBRC 105917 / EY 4224 / RW1)</name>
    <name type="common">Sphingomonas wittichii</name>
    <dbReference type="NCBI Taxonomy" id="392499"/>
    <lineage>
        <taxon>Bacteria</taxon>
        <taxon>Pseudomonadati</taxon>
        <taxon>Pseudomonadota</taxon>
        <taxon>Alphaproteobacteria</taxon>
        <taxon>Sphingomonadales</taxon>
        <taxon>Sphingomonadaceae</taxon>
        <taxon>Rhizorhabdus</taxon>
    </lineage>
</organism>
<sequence length="239" mass="24819">MADETEIQAAAPAEAAPGAEGQGERRGRGGRGRGGNDRGGDRGRGRDGRGRRDDRRGSEEQGEELIEKLVHINRVSKTVKGGKRFGFAALVVVGDGKGRAGFGHGKAREVPEAISKATAAAKKAMVRVPLREGRTLHHDGNGHFGAGRVTVRTAPPGTGIIAGGPMRAIFESLGVADVVTKSVGTSNPYNMIRATFEALKDQTSPKSVSQRRGKKIADLLGRGGASAPVAEAEAAAITE</sequence>
<reference key="1">
    <citation type="journal article" date="2010" name="J. Bacteriol.">
        <title>Genome sequence of the dioxin-mineralizing bacterium Sphingomonas wittichii RW1.</title>
        <authorList>
            <person name="Miller T.R."/>
            <person name="Delcher A.L."/>
            <person name="Salzberg S.L."/>
            <person name="Saunders E."/>
            <person name="Detter J.C."/>
            <person name="Halden R.U."/>
        </authorList>
    </citation>
    <scope>NUCLEOTIDE SEQUENCE [LARGE SCALE GENOMIC DNA]</scope>
    <source>
        <strain>DSM 6014 / CCUG 31198 / JCM 15750 / NBRC 105917 / EY 4224 / RW1</strain>
    </source>
</reference>
<feature type="chain" id="PRO_0000323203" description="Small ribosomal subunit protein uS5">
    <location>
        <begin position="1"/>
        <end position="239"/>
    </location>
</feature>
<feature type="domain" description="S5 DRBM" evidence="1">
    <location>
        <begin position="65"/>
        <end position="128"/>
    </location>
</feature>
<feature type="region of interest" description="Disordered" evidence="2">
    <location>
        <begin position="1"/>
        <end position="62"/>
    </location>
</feature>
<feature type="compositionally biased region" description="Low complexity" evidence="2">
    <location>
        <begin position="9"/>
        <end position="19"/>
    </location>
</feature>
<feature type="compositionally biased region" description="Basic and acidic residues" evidence="2">
    <location>
        <begin position="34"/>
        <end position="62"/>
    </location>
</feature>